<proteinExistence type="inferred from homology"/>
<dbReference type="EMBL" id="DQ481664">
    <property type="protein sequence ID" value="ABF22401.1"/>
    <property type="molecule type" value="Genomic_DNA"/>
</dbReference>
<dbReference type="SMR" id="Q1KKZ3"/>
<dbReference type="FunCoup" id="Q1KKZ3">
    <property type="interactions" value="2"/>
</dbReference>
<dbReference type="STRING" id="31033.ENSTRUP00000039165"/>
<dbReference type="HOGENOM" id="CLU_071854_0_0_1"/>
<dbReference type="InParanoid" id="Q1KKZ3"/>
<dbReference type="Proteomes" id="UP000005226">
    <property type="component" value="Unplaced"/>
</dbReference>
<dbReference type="GO" id="GO:0005634">
    <property type="term" value="C:nucleus"/>
    <property type="evidence" value="ECO:0007669"/>
    <property type="project" value="UniProtKB-SubCell"/>
</dbReference>
<dbReference type="GO" id="GO:0000981">
    <property type="term" value="F:DNA-binding transcription factor activity, RNA polymerase II-specific"/>
    <property type="evidence" value="ECO:0007669"/>
    <property type="project" value="InterPro"/>
</dbReference>
<dbReference type="GO" id="GO:0000978">
    <property type="term" value="F:RNA polymerase II cis-regulatory region sequence-specific DNA binding"/>
    <property type="evidence" value="ECO:0007669"/>
    <property type="project" value="TreeGrafter"/>
</dbReference>
<dbReference type="GO" id="GO:0009952">
    <property type="term" value="P:anterior/posterior pattern specification"/>
    <property type="evidence" value="ECO:0007669"/>
    <property type="project" value="TreeGrafter"/>
</dbReference>
<dbReference type="GO" id="GO:0006351">
    <property type="term" value="P:DNA-templated transcription"/>
    <property type="evidence" value="ECO:0007669"/>
    <property type="project" value="InterPro"/>
</dbReference>
<dbReference type="GO" id="GO:0048704">
    <property type="term" value="P:embryonic skeletal system morphogenesis"/>
    <property type="evidence" value="ECO:0007669"/>
    <property type="project" value="TreeGrafter"/>
</dbReference>
<dbReference type="GO" id="GO:0009954">
    <property type="term" value="P:proximal/distal pattern formation"/>
    <property type="evidence" value="ECO:0007669"/>
    <property type="project" value="TreeGrafter"/>
</dbReference>
<dbReference type="CDD" id="cd00086">
    <property type="entry name" value="homeodomain"/>
    <property type="match status" value="1"/>
</dbReference>
<dbReference type="Gene3D" id="1.10.10.60">
    <property type="entry name" value="Homeodomain-like"/>
    <property type="match status" value="1"/>
</dbReference>
<dbReference type="InterPro" id="IPR050803">
    <property type="entry name" value="Abd-B_homeobox_TF"/>
</dbReference>
<dbReference type="InterPro" id="IPR001356">
    <property type="entry name" value="HD"/>
</dbReference>
<dbReference type="InterPro" id="IPR020479">
    <property type="entry name" value="HD_metazoa"/>
</dbReference>
<dbReference type="InterPro" id="IPR017970">
    <property type="entry name" value="Homeobox_CS"/>
</dbReference>
<dbReference type="InterPro" id="IPR009057">
    <property type="entry name" value="Homeodomain-like_sf"/>
</dbReference>
<dbReference type="InterPro" id="IPR006711">
    <property type="entry name" value="Hox9_activation_N"/>
</dbReference>
<dbReference type="InterPro" id="IPR017112">
    <property type="entry name" value="HXA9/HXB9/HXC9"/>
</dbReference>
<dbReference type="PANTHER" id="PTHR45970">
    <property type="entry name" value="AGAP004664-PA"/>
    <property type="match status" value="1"/>
</dbReference>
<dbReference type="PANTHER" id="PTHR45970:SF3">
    <property type="entry name" value="HOMEOBOX PROTEIN HOX-A9"/>
    <property type="match status" value="1"/>
</dbReference>
<dbReference type="Pfam" id="PF00046">
    <property type="entry name" value="Homeodomain"/>
    <property type="match status" value="1"/>
</dbReference>
<dbReference type="Pfam" id="PF04617">
    <property type="entry name" value="Hox9_act"/>
    <property type="match status" value="1"/>
</dbReference>
<dbReference type="PIRSF" id="PIRSF037109">
    <property type="entry name" value="Homeobox_Hox9"/>
    <property type="match status" value="1"/>
</dbReference>
<dbReference type="PRINTS" id="PR00024">
    <property type="entry name" value="HOMEOBOX"/>
</dbReference>
<dbReference type="SMART" id="SM00389">
    <property type="entry name" value="HOX"/>
    <property type="match status" value="1"/>
</dbReference>
<dbReference type="SUPFAM" id="SSF46689">
    <property type="entry name" value="Homeodomain-like"/>
    <property type="match status" value="1"/>
</dbReference>
<dbReference type="PROSITE" id="PS00027">
    <property type="entry name" value="HOMEOBOX_1"/>
    <property type="match status" value="1"/>
</dbReference>
<dbReference type="PROSITE" id="PS50071">
    <property type="entry name" value="HOMEOBOX_2"/>
    <property type="match status" value="1"/>
</dbReference>
<comment type="function">
    <text evidence="1">Sequence-specific transcription factor which is part of a developmental regulatory system that provides cells with specific positional identities on the anterior-posterior axis.</text>
</comment>
<comment type="subcellular location">
    <subcellularLocation>
        <location evidence="2">Nucleus</location>
    </subcellularLocation>
</comment>
<comment type="similarity">
    <text evidence="4">Belongs to the Abd-B homeobox family.</text>
</comment>
<keyword id="KW-0217">Developmental protein</keyword>
<keyword id="KW-0238">DNA-binding</keyword>
<keyword id="KW-0371">Homeobox</keyword>
<keyword id="KW-0539">Nucleus</keyword>
<keyword id="KW-1185">Reference proteome</keyword>
<keyword id="KW-0804">Transcription</keyword>
<keyword id="KW-0805">Transcription regulation</keyword>
<gene>
    <name type="primary">hoxa9b</name>
</gene>
<organism>
    <name type="scientific">Takifugu rubripes</name>
    <name type="common">Japanese pufferfish</name>
    <name type="synonym">Fugu rubripes</name>
    <dbReference type="NCBI Taxonomy" id="31033"/>
    <lineage>
        <taxon>Eukaryota</taxon>
        <taxon>Metazoa</taxon>
        <taxon>Chordata</taxon>
        <taxon>Craniata</taxon>
        <taxon>Vertebrata</taxon>
        <taxon>Euteleostomi</taxon>
        <taxon>Actinopterygii</taxon>
        <taxon>Neopterygii</taxon>
        <taxon>Teleostei</taxon>
        <taxon>Neoteleostei</taxon>
        <taxon>Acanthomorphata</taxon>
        <taxon>Eupercaria</taxon>
        <taxon>Tetraodontiformes</taxon>
        <taxon>Tetradontoidea</taxon>
        <taxon>Tetraodontidae</taxon>
        <taxon>Takifugu</taxon>
    </lineage>
</organism>
<protein>
    <recommendedName>
        <fullName>Homeobox protein Hox-A9b</fullName>
    </recommendedName>
</protein>
<sequence>MSTLGTSYYAEASVLSEQDEIAPRYPSAAGVEQTMLTEYGGHESCPLQGKSTLFAGSWSPITTHPPNPGAPTYIHHHYTSGDSDGMFTRSWALDPASLCLTGLPSATMHYEIKPEPLIGSAECTPLETHTPLLSDIGNDATIAKIPCESTSTDKALKGDKTAEETRERDANNPSSNWLHAKPTRKKRCPYTKHQILELEKEFLFNMYLPRDRRYEVARLLHLTERQVKIWFQNRRMKMKKENKDRRRDS</sequence>
<feature type="chain" id="PRO_0000265968" description="Homeobox protein Hox-A9b">
    <location>
        <begin position="1"/>
        <end position="249"/>
    </location>
</feature>
<feature type="DNA-binding region" description="Homeobox" evidence="2">
    <location>
        <begin position="183"/>
        <end position="242"/>
    </location>
</feature>
<feature type="region of interest" description="Disordered" evidence="3">
    <location>
        <begin position="152"/>
        <end position="183"/>
    </location>
</feature>
<feature type="compositionally biased region" description="Basic and acidic residues" evidence="3">
    <location>
        <begin position="154"/>
        <end position="170"/>
    </location>
</feature>
<evidence type="ECO:0000250" key="1"/>
<evidence type="ECO:0000255" key="2">
    <source>
        <dbReference type="PROSITE-ProRule" id="PRU00108"/>
    </source>
</evidence>
<evidence type="ECO:0000256" key="3">
    <source>
        <dbReference type="SAM" id="MobiDB-lite"/>
    </source>
</evidence>
<evidence type="ECO:0000305" key="4"/>
<name>HXA9B_TAKRU</name>
<accession>Q1KKZ3</accession>
<reference key="1">
    <citation type="journal article" date="2006" name="Proc. Natl. Acad. Sci. U.S.A.">
        <title>Highly conserved syntenic blocks at the vertebrate Hox loci and conserved regulatory elements within and outside Hox gene clusters.</title>
        <authorList>
            <person name="Lee A.P."/>
            <person name="Koh E.G.L."/>
            <person name="Tay A."/>
            <person name="Brenner S."/>
            <person name="Venkatesh B."/>
        </authorList>
    </citation>
    <scope>NUCLEOTIDE SEQUENCE [GENOMIC DNA]</scope>
</reference>